<keyword id="KW-0002">3D-structure</keyword>
<keyword id="KW-0066">ATP synthesis</keyword>
<keyword id="KW-0139">CF(1)</keyword>
<keyword id="KW-0150">Chloroplast</keyword>
<keyword id="KW-0903">Direct protein sequencing</keyword>
<keyword id="KW-0375">Hydrogen ion transport</keyword>
<keyword id="KW-0406">Ion transport</keyword>
<keyword id="KW-0472">Membrane</keyword>
<keyword id="KW-0934">Plastid</keyword>
<keyword id="KW-1185">Reference proteome</keyword>
<keyword id="KW-0793">Thylakoid</keyword>
<keyword id="KW-0809">Transit peptide</keyword>
<keyword id="KW-0813">Transport</keyword>
<proteinExistence type="evidence at protein level"/>
<sequence>MAALQNPVALQSRTTTAVAALSTSSTTSTPKPFSLSFSSSTATFNPLRLKILTASKLTAKPRGGALGTRMVDSTASRYASALADVADVTGTLEATNSDVEKLIRIFSEEPVYYFFANPVISIDNKRSVLDEIITTSGLQPHTANFINILIDSERINLVKEILNEFEDVFNKITGTEVAVVTSVVKLENDHLAQIAKGVQKITGAKNVRIKTVIDPSLVAGFTIRYGNEGSKLVDMSVKKQLEEIAAQLEMDDVTLAV</sequence>
<evidence type="ECO:0000269" key="1">
    <source ref="3"/>
</evidence>
<evidence type="ECO:0000305" key="2"/>
<evidence type="ECO:0007829" key="3">
    <source>
        <dbReference type="PDB" id="6FKF"/>
    </source>
</evidence>
<dbReference type="EMBL" id="X61362">
    <property type="protein sequence ID" value="CAA43634.1"/>
    <property type="molecule type" value="Genomic_DNA"/>
</dbReference>
<dbReference type="EMBL" id="M21357">
    <property type="protein sequence ID" value="AAA34024.1"/>
    <property type="molecule type" value="Genomic_DNA"/>
</dbReference>
<dbReference type="PIR" id="S11424">
    <property type="entry name" value="PWSPD"/>
</dbReference>
<dbReference type="PDB" id="6FKF">
    <property type="method" value="EM"/>
    <property type="resolution" value="3.10 A"/>
    <property type="chains" value="d=1-257"/>
</dbReference>
<dbReference type="PDB" id="6FKH">
    <property type="method" value="EM"/>
    <property type="resolution" value="4.20 A"/>
    <property type="chains" value="d=1-257"/>
</dbReference>
<dbReference type="PDB" id="6FKI">
    <property type="method" value="EM"/>
    <property type="resolution" value="4.30 A"/>
    <property type="chains" value="d=1-257"/>
</dbReference>
<dbReference type="PDB" id="6VM1">
    <property type="method" value="EM"/>
    <property type="resolution" value="7.90 A"/>
    <property type="chains" value="d=1-257"/>
</dbReference>
<dbReference type="PDB" id="6VM4">
    <property type="method" value="EM"/>
    <property type="resolution" value="7.08 A"/>
    <property type="chains" value="d=1-257"/>
</dbReference>
<dbReference type="PDB" id="6VMB">
    <property type="method" value="EM"/>
    <property type="resolution" value="5.23 A"/>
    <property type="chains" value="d=1-257"/>
</dbReference>
<dbReference type="PDB" id="6VMD">
    <property type="method" value="EM"/>
    <property type="resolution" value="4.53 A"/>
    <property type="chains" value="d=1-257"/>
</dbReference>
<dbReference type="PDB" id="6VMG">
    <property type="method" value="EM"/>
    <property type="resolution" value="6.46 A"/>
    <property type="chains" value="d=1-257"/>
</dbReference>
<dbReference type="PDB" id="6VOF">
    <property type="method" value="EM"/>
    <property type="resolution" value="4.51 A"/>
    <property type="chains" value="d=1-257"/>
</dbReference>
<dbReference type="PDB" id="6VOG">
    <property type="method" value="EM"/>
    <property type="resolution" value="4.35 A"/>
    <property type="chains" value="d=1-257"/>
</dbReference>
<dbReference type="PDB" id="6VOH">
    <property type="method" value="EM"/>
    <property type="resolution" value="4.16 A"/>
    <property type="chains" value="d=1-257"/>
</dbReference>
<dbReference type="PDB" id="6VOI">
    <property type="method" value="EM"/>
    <property type="resolution" value="4.03 A"/>
    <property type="chains" value="d=1-257"/>
</dbReference>
<dbReference type="PDB" id="6VOJ">
    <property type="method" value="EM"/>
    <property type="resolution" value="4.34 A"/>
    <property type="chains" value="d=1-257"/>
</dbReference>
<dbReference type="PDB" id="6VOK">
    <property type="method" value="EM"/>
    <property type="resolution" value="3.85 A"/>
    <property type="chains" value="d=1-257"/>
</dbReference>
<dbReference type="PDB" id="6VOL">
    <property type="method" value="EM"/>
    <property type="resolution" value="4.06 A"/>
    <property type="chains" value="d=1-257"/>
</dbReference>
<dbReference type="PDB" id="6VOM">
    <property type="method" value="EM"/>
    <property type="resolution" value="3.60 A"/>
    <property type="chains" value="d=1-257"/>
</dbReference>
<dbReference type="PDB" id="6VON">
    <property type="method" value="EM"/>
    <property type="resolution" value="3.35 A"/>
    <property type="chains" value="d=1-257"/>
</dbReference>
<dbReference type="PDB" id="6VOO">
    <property type="method" value="EM"/>
    <property type="resolution" value="3.05 A"/>
    <property type="chains" value="d=1-257"/>
</dbReference>
<dbReference type="PDBsum" id="6FKF"/>
<dbReference type="PDBsum" id="6FKH"/>
<dbReference type="PDBsum" id="6FKI"/>
<dbReference type="PDBsum" id="6VM1"/>
<dbReference type="PDBsum" id="6VM4"/>
<dbReference type="PDBsum" id="6VMB"/>
<dbReference type="PDBsum" id="6VMD"/>
<dbReference type="PDBsum" id="6VMG"/>
<dbReference type="PDBsum" id="6VOF"/>
<dbReference type="PDBsum" id="6VOG"/>
<dbReference type="PDBsum" id="6VOH"/>
<dbReference type="PDBsum" id="6VOI"/>
<dbReference type="PDBsum" id="6VOJ"/>
<dbReference type="PDBsum" id="6VOK"/>
<dbReference type="PDBsum" id="6VOL"/>
<dbReference type="PDBsum" id="6VOM"/>
<dbReference type="PDBsum" id="6VON"/>
<dbReference type="PDBsum" id="6VOO"/>
<dbReference type="EMDB" id="EMD-21235"/>
<dbReference type="EMDB" id="EMD-21238"/>
<dbReference type="EMDB" id="EMD-21239"/>
<dbReference type="EMDB" id="EMD-21240"/>
<dbReference type="EMDB" id="EMD-21241"/>
<dbReference type="EMDB" id="EMD-21262"/>
<dbReference type="EMDB" id="EMD-21263"/>
<dbReference type="EMDB" id="EMD-21264"/>
<dbReference type="EMDB" id="EMD-21265"/>
<dbReference type="EMDB" id="EMD-21266"/>
<dbReference type="EMDB" id="EMD-21267"/>
<dbReference type="EMDB" id="EMD-21268"/>
<dbReference type="EMDB" id="EMD-21269"/>
<dbReference type="EMDB" id="EMD-21270"/>
<dbReference type="EMDB" id="EMD-21271"/>
<dbReference type="EMDB" id="EMD-4270"/>
<dbReference type="EMDB" id="EMD-4271"/>
<dbReference type="EMDB" id="EMD-4272"/>
<dbReference type="SASBDB" id="P11402"/>
<dbReference type="SMR" id="P11402"/>
<dbReference type="IntAct" id="P11402">
    <property type="interactions" value="1"/>
</dbReference>
<dbReference type="ChEMBL" id="CHEMBL2366567"/>
<dbReference type="OrthoDB" id="1262810at2759"/>
<dbReference type="Proteomes" id="UP001155700">
    <property type="component" value="Unplaced"/>
</dbReference>
<dbReference type="GO" id="GO:0009535">
    <property type="term" value="C:chloroplast thylakoid membrane"/>
    <property type="evidence" value="ECO:0007669"/>
    <property type="project" value="UniProtKB-SubCell"/>
</dbReference>
<dbReference type="GO" id="GO:0045259">
    <property type="term" value="C:proton-transporting ATP synthase complex"/>
    <property type="evidence" value="ECO:0007669"/>
    <property type="project" value="UniProtKB-KW"/>
</dbReference>
<dbReference type="GO" id="GO:0046933">
    <property type="term" value="F:proton-transporting ATP synthase activity, rotational mechanism"/>
    <property type="evidence" value="ECO:0007669"/>
    <property type="project" value="InterPro"/>
</dbReference>
<dbReference type="GO" id="GO:0009773">
    <property type="term" value="P:photosynthetic electron transport in photosystem I"/>
    <property type="evidence" value="ECO:0000318"/>
    <property type="project" value="GO_Central"/>
</dbReference>
<dbReference type="GO" id="GO:0009772">
    <property type="term" value="P:photosynthetic electron transport in photosystem II"/>
    <property type="evidence" value="ECO:0000318"/>
    <property type="project" value="GO_Central"/>
</dbReference>
<dbReference type="GO" id="GO:0015986">
    <property type="term" value="P:proton motive force-driven ATP synthesis"/>
    <property type="evidence" value="ECO:0000318"/>
    <property type="project" value="GO_Central"/>
</dbReference>
<dbReference type="Gene3D" id="1.10.520.20">
    <property type="entry name" value="N-terminal domain of the delta subunit of the F1F0-ATP synthase"/>
    <property type="match status" value="1"/>
</dbReference>
<dbReference type="HAMAP" id="MF_01416">
    <property type="entry name" value="ATP_synth_delta_bact"/>
    <property type="match status" value="1"/>
</dbReference>
<dbReference type="InterPro" id="IPR026015">
    <property type="entry name" value="ATP_synth_OSCP/delta_N_sf"/>
</dbReference>
<dbReference type="InterPro" id="IPR020781">
    <property type="entry name" value="ATPase_OSCP/d_CS"/>
</dbReference>
<dbReference type="InterPro" id="IPR000711">
    <property type="entry name" value="ATPase_OSCP/dsu"/>
</dbReference>
<dbReference type="NCBIfam" id="TIGR01145">
    <property type="entry name" value="ATP_synt_delta"/>
    <property type="match status" value="1"/>
</dbReference>
<dbReference type="PANTHER" id="PTHR11910">
    <property type="entry name" value="ATP SYNTHASE DELTA CHAIN"/>
    <property type="match status" value="1"/>
</dbReference>
<dbReference type="Pfam" id="PF00213">
    <property type="entry name" value="OSCP"/>
    <property type="match status" value="1"/>
</dbReference>
<dbReference type="PRINTS" id="PR00125">
    <property type="entry name" value="ATPASEDELTA"/>
</dbReference>
<dbReference type="SUPFAM" id="SSF47928">
    <property type="entry name" value="N-terminal domain of the delta subunit of the F1F0-ATP synthase"/>
    <property type="match status" value="1"/>
</dbReference>
<dbReference type="PROSITE" id="PS00389">
    <property type="entry name" value="ATPASE_DELTA"/>
    <property type="match status" value="1"/>
</dbReference>
<feature type="transit peptide" description="Chloroplast" evidence="1">
    <location>
        <begin position="1"/>
        <end position="70"/>
    </location>
</feature>
<feature type="chain" id="PRO_0000002641" description="ATP synthase delta chain, chloroplastic">
    <location>
        <begin position="71"/>
        <end position="257"/>
    </location>
</feature>
<feature type="sequence conflict" description="In Ref. 2; AAA34024." evidence="2" ref="2">
    <original>T</original>
    <variation>P</variation>
    <location>
        <position position="29"/>
    </location>
</feature>
<feature type="helix" evidence="3">
    <location>
        <begin position="74"/>
        <end position="89"/>
    </location>
</feature>
<feature type="helix" evidence="3">
    <location>
        <begin position="92"/>
        <end position="106"/>
    </location>
</feature>
<feature type="helix" evidence="3">
    <location>
        <begin position="109"/>
        <end position="116"/>
    </location>
</feature>
<feature type="strand" evidence="3">
    <location>
        <begin position="118"/>
        <end position="120"/>
    </location>
</feature>
<feature type="helix" evidence="3">
    <location>
        <begin position="122"/>
        <end position="136"/>
    </location>
</feature>
<feature type="helix" evidence="3">
    <location>
        <begin position="140"/>
        <end position="151"/>
    </location>
</feature>
<feature type="helix" evidence="3">
    <location>
        <begin position="154"/>
        <end position="157"/>
    </location>
</feature>
<feature type="helix" evidence="3">
    <location>
        <begin position="158"/>
        <end position="173"/>
    </location>
</feature>
<feature type="strand" evidence="3">
    <location>
        <begin position="178"/>
        <end position="184"/>
    </location>
</feature>
<feature type="helix" evidence="3">
    <location>
        <begin position="188"/>
        <end position="202"/>
    </location>
</feature>
<feature type="strand" evidence="3">
    <location>
        <begin position="205"/>
        <end position="207"/>
    </location>
</feature>
<feature type="strand" evidence="3">
    <location>
        <begin position="210"/>
        <end position="213"/>
    </location>
</feature>
<feature type="strand" evidence="3">
    <location>
        <begin position="215"/>
        <end position="217"/>
    </location>
</feature>
<feature type="strand" evidence="3">
    <location>
        <begin position="221"/>
        <end position="225"/>
    </location>
</feature>
<feature type="turn" evidence="3">
    <location>
        <begin position="226"/>
        <end position="229"/>
    </location>
</feature>
<feature type="strand" evidence="3">
    <location>
        <begin position="231"/>
        <end position="234"/>
    </location>
</feature>
<feature type="helix" evidence="3">
    <location>
        <begin position="238"/>
        <end position="247"/>
    </location>
</feature>
<comment type="function">
    <text>This protein seems to be part of the stalk that links CF(0) to CF(1). It either transmits conformational changes from CF(0) into CF(1) or is implicated in proton conduction.</text>
</comment>
<comment type="subunit">
    <text>F-type ATPases have 2 components, CF(1) - the catalytic core - and CF(0) - the membrane proton channel. CF(1) has five subunits: alpha(3), beta(3), gamma(1), delta(1), epsilon(1). CF(0) has three main subunits: a, b and c.</text>
</comment>
<comment type="subcellular location">
    <subcellularLocation>
        <location>Plastid</location>
        <location>Chloroplast thylakoid membrane</location>
    </subcellularLocation>
</comment>
<comment type="similarity">
    <text evidence="2">Belongs to the ATPase delta chain family.</text>
</comment>
<protein>
    <recommendedName>
        <fullName>ATP synthase delta chain, chloroplastic</fullName>
    </recommendedName>
    <alternativeName>
        <fullName>F-ATPase delta chain</fullName>
    </alternativeName>
</protein>
<gene>
    <name type="primary">ATPD</name>
</gene>
<organism>
    <name type="scientific">Spinacia oleracea</name>
    <name type="common">Spinach</name>
    <dbReference type="NCBI Taxonomy" id="3562"/>
    <lineage>
        <taxon>Eukaryota</taxon>
        <taxon>Viridiplantae</taxon>
        <taxon>Streptophyta</taxon>
        <taxon>Embryophyta</taxon>
        <taxon>Tracheophyta</taxon>
        <taxon>Spermatophyta</taxon>
        <taxon>Magnoliopsida</taxon>
        <taxon>eudicotyledons</taxon>
        <taxon>Gunneridae</taxon>
        <taxon>Pentapetalae</taxon>
        <taxon>Caryophyllales</taxon>
        <taxon>Chenopodiaceae</taxon>
        <taxon>Chenopodioideae</taxon>
        <taxon>Anserineae</taxon>
        <taxon>Spinacia</taxon>
    </lineage>
</organism>
<reference key="1">
    <citation type="journal article" date="1990" name="Eur. J. Biochem.">
        <title>Analysis of the promotors of the single-copy genes for plastocyanin and subunit delta of the chloroplast ATP synthase from spinach.</title>
        <authorList>
            <person name="Bichler J."/>
            <person name="Herrmann R.G."/>
        </authorList>
    </citation>
    <scope>NUCLEOTIDE SEQUENCE [GENOMIC DNA]</scope>
    <source>
        <strain>cv. Monatol</strain>
    </source>
</reference>
<reference key="2">
    <citation type="journal article" date="1988" name="Plant Mol. Biol.">
        <title>Nucleotide sequence of cDNA clones encoding the complete precursor for subunit delta of thylakoid-located ATP synthase from spinach.</title>
        <authorList>
            <person name="Hermans J."/>
            <person name="Rother C."/>
            <person name="Bichler J."/>
            <person name="Steppuhn J."/>
            <person name="Herrmann R.G."/>
        </authorList>
        <dbReference type="AGRICOLA" id="IND92000617"/>
    </citation>
    <scope>NUCLEOTIDE SEQUENCE [GENOMIC DNA]</scope>
</reference>
<reference key="3">
    <citation type="journal article" date="1987" name="Z. Naturforsch. C">
        <title>Protein sequence and structure of N-terminal amino acids of subunit delta of spinach photosynthetic ATP-synthase CF1.</title>
        <authorList>
            <person name="Berzborn R.J."/>
            <person name="Finke W."/>
            <person name="Otto J."/>
            <person name="Meyer H.E."/>
        </authorList>
    </citation>
    <scope>PROTEIN SEQUENCE OF 71-105</scope>
</reference>
<accession>P11402</accession>
<name>ATPD_SPIOL</name>